<name>GLGX_MYCTU</name>
<sequence>MSSNNAGESDGTGPALPTVWPGNAYPLGATYDGAGTNFSLFSEIAEKVELCLIDEDGVESRIPLDEVDGYVWHAYLPNITPGQRYGFRVHGPFDPAAGHRCDPSKLLLDPYGKSFHGDFTFGQALYSYDVNAVDPDSTPPMVDSLGHTMTSVVINPFFDWAYDRSPRTPYHETVIYEAHVKGMTQTHPSIPPELRGTYAGLAHPVIIDHLNELNVTAVELMPVHQFLHDSRLLDLGLRNYWGYNTFGFFAPHHQYASTRQAGSAVAEFKTMVRSLHEAGIEVILDVVYNHTAEGNHLGPTINFRGIDNTAYYRLMDHDLRFYKDFTGTGNSLNARHPHTLQLIMDSLRYWVIEMHVDGFRFDLASTLARELHDVDRLSAFFDLVQQDPVVSQVKLIAEPWDVGEGGYQVGNFPGLWTEWNGKYRDTVRDYWRGEPATLGEFASRLTGSSDLYEATGRRPSASINFVTAHDGFTLNDLVSYNDKHNEANGENNRDGESYNRSWNCGVEGPTDDPDILALRARQMRNMWATLMVSQGTPMIAHGDEIGRTQYGNNNVYCQDSELSWMDWSLVDKNADLLAFARKATTLRKNHKVFRRRRFFEGEPIRSGDEVRDIAWLTPSGREMTHEDWGRGFDRCVAVFLNGEAITAPDARGERVVDDSFLLCFNAHDHDVEFVMPHDGYAQQWTGELDTNDPVGDIDLTVTATDTFSVPARSLLVLRKTL</sequence>
<feature type="chain" id="PRO_0000054307" description="Glycogen operon protein GlgX homolog">
    <location>
        <begin position="1"/>
        <end position="721"/>
    </location>
</feature>
<feature type="active site" description="Nucleophile" evidence="1">
    <location>
        <position position="362"/>
    </location>
</feature>
<feature type="active site" description="Proton donor" evidence="1">
    <location>
        <position position="398"/>
    </location>
</feature>
<feature type="site" description="Transition state stabilizer" evidence="1">
    <location>
        <position position="470"/>
    </location>
</feature>
<comment type="similarity">
    <text evidence="2">Belongs to the glycosyl hydrolase 13 family.</text>
</comment>
<protein>
    <recommendedName>
        <fullName>Glycogen operon protein GlgX homolog</fullName>
        <ecNumber>3.2.1.-</ecNumber>
    </recommendedName>
</protein>
<accession>P9WQ25</accession>
<accession>L0T9Z7</accession>
<accession>P0A4Y4</accession>
<accession>Q10767</accession>
<reference key="1">
    <citation type="journal article" date="1998" name="Nature">
        <title>Deciphering the biology of Mycobacterium tuberculosis from the complete genome sequence.</title>
        <authorList>
            <person name="Cole S.T."/>
            <person name="Brosch R."/>
            <person name="Parkhill J."/>
            <person name="Garnier T."/>
            <person name="Churcher C.M."/>
            <person name="Harris D.E."/>
            <person name="Gordon S.V."/>
            <person name="Eiglmeier K."/>
            <person name="Gas S."/>
            <person name="Barry C.E. III"/>
            <person name="Tekaia F."/>
            <person name="Badcock K."/>
            <person name="Basham D."/>
            <person name="Brown D."/>
            <person name="Chillingworth T."/>
            <person name="Connor R."/>
            <person name="Davies R.M."/>
            <person name="Devlin K."/>
            <person name="Feltwell T."/>
            <person name="Gentles S."/>
            <person name="Hamlin N."/>
            <person name="Holroyd S."/>
            <person name="Hornsby T."/>
            <person name="Jagels K."/>
            <person name="Krogh A."/>
            <person name="McLean J."/>
            <person name="Moule S."/>
            <person name="Murphy L.D."/>
            <person name="Oliver S."/>
            <person name="Osborne J."/>
            <person name="Quail M.A."/>
            <person name="Rajandream M.A."/>
            <person name="Rogers J."/>
            <person name="Rutter S."/>
            <person name="Seeger K."/>
            <person name="Skelton S."/>
            <person name="Squares S."/>
            <person name="Squares R."/>
            <person name="Sulston J.E."/>
            <person name="Taylor K."/>
            <person name="Whitehead S."/>
            <person name="Barrell B.G."/>
        </authorList>
    </citation>
    <scope>NUCLEOTIDE SEQUENCE [LARGE SCALE GENOMIC DNA]</scope>
    <source>
        <strain>ATCC 25618 / H37Rv</strain>
    </source>
</reference>
<reference key="2">
    <citation type="journal article" date="2011" name="Mol. Cell. Proteomics">
        <title>Proteogenomic analysis of Mycobacterium tuberculosis by high resolution mass spectrometry.</title>
        <authorList>
            <person name="Kelkar D.S."/>
            <person name="Kumar D."/>
            <person name="Kumar P."/>
            <person name="Balakrishnan L."/>
            <person name="Muthusamy B."/>
            <person name="Yadav A.K."/>
            <person name="Shrivastava P."/>
            <person name="Marimuthu A."/>
            <person name="Anand S."/>
            <person name="Sundaram H."/>
            <person name="Kingsbury R."/>
            <person name="Harsha H.C."/>
            <person name="Nair B."/>
            <person name="Prasad T.S."/>
            <person name="Chauhan D.S."/>
            <person name="Katoch K."/>
            <person name="Katoch V.M."/>
            <person name="Kumar P."/>
            <person name="Chaerkady R."/>
            <person name="Ramachandran S."/>
            <person name="Dash D."/>
            <person name="Pandey A."/>
        </authorList>
    </citation>
    <scope>IDENTIFICATION BY MASS SPECTROMETRY [LARGE SCALE ANALYSIS]</scope>
    <source>
        <strain>ATCC 25618 / H37Rv</strain>
    </source>
</reference>
<evidence type="ECO:0000250" key="1"/>
<evidence type="ECO:0000305" key="2"/>
<dbReference type="EC" id="3.2.1.-"/>
<dbReference type="EMBL" id="AL123456">
    <property type="protein sequence ID" value="CCP44328.1"/>
    <property type="molecule type" value="Genomic_DNA"/>
</dbReference>
<dbReference type="PIR" id="A70764">
    <property type="entry name" value="A70764"/>
</dbReference>
<dbReference type="RefSeq" id="WP_003898930.1">
    <property type="nucleotide sequence ID" value="NZ_NVQJ01000004.1"/>
</dbReference>
<dbReference type="RefSeq" id="YP_177821.1">
    <property type="nucleotide sequence ID" value="NC_000962.3"/>
</dbReference>
<dbReference type="SMR" id="P9WQ25"/>
<dbReference type="FunCoup" id="P9WQ25">
    <property type="interactions" value="120"/>
</dbReference>
<dbReference type="STRING" id="83332.Rv1564c"/>
<dbReference type="PaxDb" id="83332-Rv1564c"/>
<dbReference type="DNASU" id="886353"/>
<dbReference type="GeneID" id="886353"/>
<dbReference type="KEGG" id="mtu:Rv1564c"/>
<dbReference type="KEGG" id="mtv:RVBD_1564c"/>
<dbReference type="TubercuList" id="Rv1564c"/>
<dbReference type="eggNOG" id="COG1523">
    <property type="taxonomic scope" value="Bacteria"/>
</dbReference>
<dbReference type="InParanoid" id="P9WQ25"/>
<dbReference type="OrthoDB" id="3236218at2"/>
<dbReference type="PhylomeDB" id="P9WQ25"/>
<dbReference type="Proteomes" id="UP000001584">
    <property type="component" value="Chromosome"/>
</dbReference>
<dbReference type="GO" id="GO:0004133">
    <property type="term" value="F:glycogen debranching enzyme activity"/>
    <property type="evidence" value="ECO:0007669"/>
    <property type="project" value="InterPro"/>
</dbReference>
<dbReference type="GO" id="GO:0004553">
    <property type="term" value="F:hydrolase activity, hydrolyzing O-glycosyl compounds"/>
    <property type="evidence" value="ECO:0007669"/>
    <property type="project" value="InterPro"/>
</dbReference>
<dbReference type="GO" id="GO:0005980">
    <property type="term" value="P:glycogen catabolic process"/>
    <property type="evidence" value="ECO:0007669"/>
    <property type="project" value="InterPro"/>
</dbReference>
<dbReference type="CDD" id="cd11326">
    <property type="entry name" value="AmyAc_Glg_debranch"/>
    <property type="match status" value="1"/>
</dbReference>
<dbReference type="CDD" id="cd02856">
    <property type="entry name" value="E_set_GDE_Isoamylase_N"/>
    <property type="match status" value="1"/>
</dbReference>
<dbReference type="Gene3D" id="3.20.20.80">
    <property type="entry name" value="Glycosidases"/>
    <property type="match status" value="1"/>
</dbReference>
<dbReference type="Gene3D" id="2.60.40.1180">
    <property type="entry name" value="Golgi alpha-mannosidase II"/>
    <property type="match status" value="1"/>
</dbReference>
<dbReference type="Gene3D" id="2.60.40.10">
    <property type="entry name" value="Immunoglobulins"/>
    <property type="match status" value="1"/>
</dbReference>
<dbReference type="InterPro" id="IPR044505">
    <property type="entry name" value="GlgX_Isoamylase_N_E_set"/>
</dbReference>
<dbReference type="InterPro" id="IPR006047">
    <property type="entry name" value="Glyco_hydro_13_cat_dom"/>
</dbReference>
<dbReference type="InterPro" id="IPR004193">
    <property type="entry name" value="Glyco_hydro_13_N"/>
</dbReference>
<dbReference type="InterPro" id="IPR013780">
    <property type="entry name" value="Glyco_hydro_b"/>
</dbReference>
<dbReference type="InterPro" id="IPR011837">
    <property type="entry name" value="Glycogen_debranch_GlgX"/>
</dbReference>
<dbReference type="InterPro" id="IPR017853">
    <property type="entry name" value="Glycoside_hydrolase_SF"/>
</dbReference>
<dbReference type="InterPro" id="IPR013783">
    <property type="entry name" value="Ig-like_fold"/>
</dbReference>
<dbReference type="InterPro" id="IPR014756">
    <property type="entry name" value="Ig_E-set"/>
</dbReference>
<dbReference type="NCBIfam" id="TIGR02100">
    <property type="entry name" value="glgX_debranch"/>
    <property type="match status" value="1"/>
</dbReference>
<dbReference type="PANTHER" id="PTHR43002">
    <property type="entry name" value="GLYCOGEN DEBRANCHING ENZYME"/>
    <property type="match status" value="1"/>
</dbReference>
<dbReference type="Pfam" id="PF00128">
    <property type="entry name" value="Alpha-amylase"/>
    <property type="match status" value="1"/>
</dbReference>
<dbReference type="Pfam" id="PF02922">
    <property type="entry name" value="CBM_48"/>
    <property type="match status" value="1"/>
</dbReference>
<dbReference type="SMART" id="SM00642">
    <property type="entry name" value="Aamy"/>
    <property type="match status" value="1"/>
</dbReference>
<dbReference type="SUPFAM" id="SSF51445">
    <property type="entry name" value="(Trans)glycosidases"/>
    <property type="match status" value="1"/>
</dbReference>
<dbReference type="SUPFAM" id="SSF81296">
    <property type="entry name" value="E set domains"/>
    <property type="match status" value="1"/>
</dbReference>
<dbReference type="SUPFAM" id="SSF51011">
    <property type="entry name" value="Glycosyl hydrolase domain"/>
    <property type="match status" value="1"/>
</dbReference>
<organism>
    <name type="scientific">Mycobacterium tuberculosis (strain ATCC 25618 / H37Rv)</name>
    <dbReference type="NCBI Taxonomy" id="83332"/>
    <lineage>
        <taxon>Bacteria</taxon>
        <taxon>Bacillati</taxon>
        <taxon>Actinomycetota</taxon>
        <taxon>Actinomycetes</taxon>
        <taxon>Mycobacteriales</taxon>
        <taxon>Mycobacteriaceae</taxon>
        <taxon>Mycobacterium</taxon>
        <taxon>Mycobacterium tuberculosis complex</taxon>
    </lineage>
</organism>
<proteinExistence type="evidence at protein level"/>
<gene>
    <name type="primary">glgX</name>
    <name type="synonym">treX</name>
    <name type="ordered locus">Rv1564c</name>
    <name type="ORF">MTCY48.01</name>
</gene>
<keyword id="KW-0326">Glycosidase</keyword>
<keyword id="KW-0378">Hydrolase</keyword>
<keyword id="KW-1185">Reference proteome</keyword>